<protein>
    <recommendedName>
        <fullName>Dual specificity phosphatase 21</fullName>
        <ecNumber evidence="4">3.1.3.16</ecNumber>
        <ecNumber evidence="4">3.1.3.48</ecNumber>
    </recommendedName>
</protein>
<accession>Q9D9D8</accession>
<comment type="function">
    <text evidence="4 5 6">Protein phosphatase component of the sperm flagellar doublet microtubules (PubMed:37295417, PubMed:37989994). May act as a regulator of sperm motility by mediating dephosphorylation of sperm doublet microtubule proteins (PubMed:37295417). Can dephosphorylate single and diphosphorylated synthetic MAPK peptides, with preference for the phosphotyrosine and diphosphorylated forms over phosphothreonine (PubMed:18385140).</text>
</comment>
<comment type="catalytic activity">
    <reaction evidence="3 4">
        <text>O-phospho-L-tyrosyl-[protein] + H2O = L-tyrosyl-[protein] + phosphate</text>
        <dbReference type="Rhea" id="RHEA:10684"/>
        <dbReference type="Rhea" id="RHEA-COMP:10136"/>
        <dbReference type="Rhea" id="RHEA-COMP:20101"/>
        <dbReference type="ChEBI" id="CHEBI:15377"/>
        <dbReference type="ChEBI" id="CHEBI:43474"/>
        <dbReference type="ChEBI" id="CHEBI:46858"/>
        <dbReference type="ChEBI" id="CHEBI:61978"/>
        <dbReference type="EC" id="3.1.3.48"/>
    </reaction>
</comment>
<comment type="catalytic activity">
    <reaction evidence="4">
        <text>O-phospho-L-seryl-[protein] + H2O = L-seryl-[protein] + phosphate</text>
        <dbReference type="Rhea" id="RHEA:20629"/>
        <dbReference type="Rhea" id="RHEA-COMP:9863"/>
        <dbReference type="Rhea" id="RHEA-COMP:11604"/>
        <dbReference type="ChEBI" id="CHEBI:15377"/>
        <dbReference type="ChEBI" id="CHEBI:29999"/>
        <dbReference type="ChEBI" id="CHEBI:43474"/>
        <dbReference type="ChEBI" id="CHEBI:83421"/>
        <dbReference type="EC" id="3.1.3.16"/>
    </reaction>
</comment>
<comment type="catalytic activity">
    <reaction evidence="4">
        <text>O-phospho-L-threonyl-[protein] + H2O = L-threonyl-[protein] + phosphate</text>
        <dbReference type="Rhea" id="RHEA:47004"/>
        <dbReference type="Rhea" id="RHEA-COMP:11060"/>
        <dbReference type="Rhea" id="RHEA-COMP:11605"/>
        <dbReference type="ChEBI" id="CHEBI:15377"/>
        <dbReference type="ChEBI" id="CHEBI:30013"/>
        <dbReference type="ChEBI" id="CHEBI:43474"/>
        <dbReference type="ChEBI" id="CHEBI:61977"/>
        <dbReference type="EC" id="3.1.3.16"/>
    </reaction>
</comment>
<comment type="biophysicochemical properties">
    <kinetics>
        <KM evidence="5">10 uM for a peptide</KM>
    </kinetics>
</comment>
<comment type="subunit">
    <text evidence="5 6">Microtubule inner protein component of sperm flagellar doublet microtubules.</text>
</comment>
<comment type="subcellular location">
    <subcellularLocation>
        <location evidence="1">Cytoplasm</location>
    </subcellularLocation>
    <subcellularLocation>
        <location evidence="1">Nucleus</location>
    </subcellularLocation>
    <subcellularLocation>
        <location evidence="4">Mitochondrion inner membrane</location>
        <topology evidence="4">Peripheral membrane protein</topology>
        <orientation evidence="4">Matrix side</orientation>
    </subcellularLocation>
    <subcellularLocation>
        <location evidence="5 6">Cytoplasm</location>
        <location evidence="5 6">Cytoskeleton</location>
        <location evidence="5 6">Flagellum axoneme</location>
    </subcellularLocation>
</comment>
<comment type="tissue specificity">
    <text evidence="4">Selectively expressed in testis.</text>
</comment>
<comment type="similarity">
    <text evidence="8">Belongs to the protein-tyrosine phosphatase family. Non-receptor class dual specificity subfamily.</text>
</comment>
<keyword id="KW-0002">3D-structure</keyword>
<keyword id="KW-0966">Cell projection</keyword>
<keyword id="KW-0969">Cilium</keyword>
<keyword id="KW-0963">Cytoplasm</keyword>
<keyword id="KW-0206">Cytoskeleton</keyword>
<keyword id="KW-0282">Flagellum</keyword>
<keyword id="KW-0378">Hydrolase</keyword>
<keyword id="KW-0472">Membrane</keyword>
<keyword id="KW-0496">Mitochondrion</keyword>
<keyword id="KW-0999">Mitochondrion inner membrane</keyword>
<keyword id="KW-0539">Nucleus</keyword>
<keyword id="KW-0904">Protein phosphatase</keyword>
<keyword id="KW-1185">Reference proteome</keyword>
<sequence length="189" mass="21509">MTTASCIFPSQATQQDNIYGLSQITASLFISNSAVANDKLTLSNNHITTIINVSAEVVNTFFEDIQYVQVPVSDAPNSYLYDFFDPIADHIHGVEMRNGRTLLHCAAGVSRSATLCLAYLMKYHNMTLLDAHTWTKTCRPIIRPNNGFWEQLIHYEFKLFSRNTVRMIYSPIGLIPNIYEKEAYLMELM</sequence>
<proteinExistence type="evidence at protein level"/>
<dbReference type="EC" id="3.1.3.16" evidence="4"/>
<dbReference type="EC" id="3.1.3.48" evidence="4"/>
<dbReference type="EMBL" id="AK007061">
    <property type="protein sequence ID" value="BAB24847.1"/>
    <property type="molecule type" value="mRNA"/>
</dbReference>
<dbReference type="EMBL" id="AL773547">
    <property type="status" value="NOT_ANNOTATED_CDS"/>
    <property type="molecule type" value="Genomic_DNA"/>
</dbReference>
<dbReference type="EMBL" id="CH466584">
    <property type="protein sequence ID" value="EDL35726.1"/>
    <property type="molecule type" value="Genomic_DNA"/>
</dbReference>
<dbReference type="EMBL" id="BC048605">
    <property type="protein sequence ID" value="AAH48605.1"/>
    <property type="molecule type" value="mRNA"/>
</dbReference>
<dbReference type="CCDS" id="CCDS30036.1"/>
<dbReference type="RefSeq" id="NP_082844.1">
    <property type="nucleotide sequence ID" value="NM_028568.1"/>
</dbReference>
<dbReference type="PDB" id="8I7O">
    <property type="method" value="EM"/>
    <property type="resolution" value="4.50 A"/>
    <property type="chains" value="J2/J3=1-189"/>
</dbReference>
<dbReference type="PDB" id="8I7R">
    <property type="method" value="EM"/>
    <property type="resolution" value="6.50 A"/>
    <property type="chains" value="J1/J2/J3=1-189"/>
</dbReference>
<dbReference type="PDB" id="8IYJ">
    <property type="method" value="EM"/>
    <property type="resolution" value="3.50 A"/>
    <property type="chains" value="O1/O2/O3/O4=1-189"/>
</dbReference>
<dbReference type="PDBsum" id="8I7O"/>
<dbReference type="PDBsum" id="8I7R"/>
<dbReference type="PDBsum" id="8IYJ"/>
<dbReference type="EMDB" id="EMD-35229"/>
<dbReference type="EMDB" id="EMD-35230"/>
<dbReference type="EMDB" id="EMD-35823"/>
<dbReference type="SMR" id="Q9D9D8"/>
<dbReference type="FunCoup" id="Q9D9D8">
    <property type="interactions" value="57"/>
</dbReference>
<dbReference type="STRING" id="10090.ENSMUSP00000026018"/>
<dbReference type="PhosphoSitePlus" id="Q9D9D8"/>
<dbReference type="PaxDb" id="10090-ENSMUSP00000026018"/>
<dbReference type="ProteomicsDB" id="277415"/>
<dbReference type="Antibodypedia" id="25173">
    <property type="antibodies" value="44 antibodies from 11 providers"/>
</dbReference>
<dbReference type="DNASU" id="73547"/>
<dbReference type="Ensembl" id="ENSMUST00000026018.4">
    <property type="protein sequence ID" value="ENSMUSP00000026018.3"/>
    <property type="gene ID" value="ENSMUSG00000025043.4"/>
</dbReference>
<dbReference type="GeneID" id="73547"/>
<dbReference type="KEGG" id="mmu:73547"/>
<dbReference type="UCSC" id="uc009ssi.1">
    <property type="organism name" value="mouse"/>
</dbReference>
<dbReference type="AGR" id="MGI:1920797"/>
<dbReference type="CTD" id="63904"/>
<dbReference type="MGI" id="MGI:1920797">
    <property type="gene designation" value="Dusp21"/>
</dbReference>
<dbReference type="VEuPathDB" id="HostDB:ENSMUSG00000025043"/>
<dbReference type="eggNOG" id="KOG1718">
    <property type="taxonomic scope" value="Eukaryota"/>
</dbReference>
<dbReference type="GeneTree" id="ENSGT00940000163638"/>
<dbReference type="HOGENOM" id="CLU_027074_3_2_1"/>
<dbReference type="InParanoid" id="Q9D9D8"/>
<dbReference type="OMA" id="GVEYFHI"/>
<dbReference type="OrthoDB" id="285418at2759"/>
<dbReference type="PhylomeDB" id="Q9D9D8"/>
<dbReference type="TreeFam" id="TF316009"/>
<dbReference type="BioGRID-ORCS" id="73547">
    <property type="hits" value="1 hit in 76 CRISPR screens"/>
</dbReference>
<dbReference type="ChiTaRS" id="Dusp21">
    <property type="organism name" value="mouse"/>
</dbReference>
<dbReference type="PRO" id="PR:Q9D9D8"/>
<dbReference type="Proteomes" id="UP000000589">
    <property type="component" value="Chromosome X"/>
</dbReference>
<dbReference type="RNAct" id="Q9D9D8">
    <property type="molecule type" value="protein"/>
</dbReference>
<dbReference type="Bgee" id="ENSMUSG00000025043">
    <property type="expression patterns" value="Expressed in seminiferous tubule of testis and 2 other cell types or tissues"/>
</dbReference>
<dbReference type="GO" id="GO:0160111">
    <property type="term" value="C:axonemal A tubule inner sheath"/>
    <property type="evidence" value="ECO:0000314"/>
    <property type="project" value="UniProtKB"/>
</dbReference>
<dbReference type="GO" id="GO:0019898">
    <property type="term" value="C:extrinsic component of membrane"/>
    <property type="evidence" value="ECO:0000250"/>
    <property type="project" value="MGI"/>
</dbReference>
<dbReference type="GO" id="GO:0005743">
    <property type="term" value="C:mitochondrial inner membrane"/>
    <property type="evidence" value="ECO:0000250"/>
    <property type="project" value="MGI"/>
</dbReference>
<dbReference type="GO" id="GO:0005758">
    <property type="term" value="C:mitochondrial intermembrane space"/>
    <property type="evidence" value="ECO:0000250"/>
    <property type="project" value="MGI"/>
</dbReference>
<dbReference type="GO" id="GO:0005759">
    <property type="term" value="C:mitochondrial matrix"/>
    <property type="evidence" value="ECO:0007669"/>
    <property type="project" value="Ensembl"/>
</dbReference>
<dbReference type="GO" id="GO:0005739">
    <property type="term" value="C:mitochondrion"/>
    <property type="evidence" value="ECO:0000250"/>
    <property type="project" value="MGI"/>
</dbReference>
<dbReference type="GO" id="GO:0005634">
    <property type="term" value="C:nucleus"/>
    <property type="evidence" value="ECO:0007669"/>
    <property type="project" value="UniProtKB-SubCell"/>
</dbReference>
<dbReference type="GO" id="GO:0036126">
    <property type="term" value="C:sperm flagellum"/>
    <property type="evidence" value="ECO:0000314"/>
    <property type="project" value="UniProtKB"/>
</dbReference>
<dbReference type="GO" id="GO:0017017">
    <property type="term" value="F:MAP kinase tyrosine/serine/threonine phosphatase activity"/>
    <property type="evidence" value="ECO:0007669"/>
    <property type="project" value="InterPro"/>
</dbReference>
<dbReference type="GO" id="GO:0016791">
    <property type="term" value="F:phosphatase activity"/>
    <property type="evidence" value="ECO:0000250"/>
    <property type="project" value="MGI"/>
</dbReference>
<dbReference type="GO" id="GO:0004721">
    <property type="term" value="F:phosphoprotein phosphatase activity"/>
    <property type="evidence" value="ECO:0000314"/>
    <property type="project" value="UniProtKB"/>
</dbReference>
<dbReference type="GO" id="GO:0004722">
    <property type="term" value="F:protein serine/threonine phosphatase activity"/>
    <property type="evidence" value="ECO:0007669"/>
    <property type="project" value="UniProtKB-EC"/>
</dbReference>
<dbReference type="GO" id="GO:0004725">
    <property type="term" value="F:protein tyrosine phosphatase activity"/>
    <property type="evidence" value="ECO:0007669"/>
    <property type="project" value="UniProtKB-EC"/>
</dbReference>
<dbReference type="GO" id="GO:0030317">
    <property type="term" value="P:flagellated sperm motility"/>
    <property type="evidence" value="ECO:0000314"/>
    <property type="project" value="UniProtKB"/>
</dbReference>
<dbReference type="GO" id="GO:0033365">
    <property type="term" value="P:protein localization to organelle"/>
    <property type="evidence" value="ECO:0000250"/>
    <property type="project" value="MGI"/>
</dbReference>
<dbReference type="GO" id="GO:0006612">
    <property type="term" value="P:protein targeting to membrane"/>
    <property type="evidence" value="ECO:0000250"/>
    <property type="project" value="MGI"/>
</dbReference>
<dbReference type="GO" id="GO:0006626">
    <property type="term" value="P:protein targeting to mitochondrion"/>
    <property type="evidence" value="ECO:0000250"/>
    <property type="project" value="MGI"/>
</dbReference>
<dbReference type="FunFam" id="3.90.190.10:FF:000049">
    <property type="entry name" value="Dual specificity protein phosphatase 14"/>
    <property type="match status" value="1"/>
</dbReference>
<dbReference type="Gene3D" id="3.90.190.10">
    <property type="entry name" value="Protein tyrosine phosphatase superfamily"/>
    <property type="match status" value="1"/>
</dbReference>
<dbReference type="InterPro" id="IPR020420">
    <property type="entry name" value="Atypical_DUSP_subfamB"/>
</dbReference>
<dbReference type="InterPro" id="IPR000340">
    <property type="entry name" value="Dual-sp_phosphatase_cat-dom"/>
</dbReference>
<dbReference type="InterPro" id="IPR029021">
    <property type="entry name" value="Prot-tyrosine_phosphatase-like"/>
</dbReference>
<dbReference type="InterPro" id="IPR016130">
    <property type="entry name" value="Tyr_Pase_AS"/>
</dbReference>
<dbReference type="InterPro" id="IPR000387">
    <property type="entry name" value="Tyr_Pase_dom"/>
</dbReference>
<dbReference type="InterPro" id="IPR020422">
    <property type="entry name" value="TYR_PHOSPHATASE_DUAL_dom"/>
</dbReference>
<dbReference type="PANTHER" id="PTHR46495:SF1">
    <property type="entry name" value="DUAL SPECIFICITY PHOSPHATASE 21"/>
    <property type="match status" value="1"/>
</dbReference>
<dbReference type="PANTHER" id="PTHR46495">
    <property type="entry name" value="DUAL SPECIFICITY PROTEIN PHOSPHATASE 21"/>
    <property type="match status" value="1"/>
</dbReference>
<dbReference type="Pfam" id="PF00782">
    <property type="entry name" value="DSPc"/>
    <property type="match status" value="1"/>
</dbReference>
<dbReference type="PRINTS" id="PR01908">
    <property type="entry name" value="ADSPHPHTASE"/>
</dbReference>
<dbReference type="PRINTS" id="PR01910">
    <property type="entry name" value="ADSPHPHTASEB"/>
</dbReference>
<dbReference type="SMART" id="SM00195">
    <property type="entry name" value="DSPc"/>
    <property type="match status" value="1"/>
</dbReference>
<dbReference type="SUPFAM" id="SSF52799">
    <property type="entry name" value="(Phosphotyrosine protein) phosphatases II"/>
    <property type="match status" value="1"/>
</dbReference>
<dbReference type="PROSITE" id="PS00383">
    <property type="entry name" value="TYR_PHOSPHATASE_1"/>
    <property type="match status" value="1"/>
</dbReference>
<dbReference type="PROSITE" id="PS50056">
    <property type="entry name" value="TYR_PHOSPHATASE_2"/>
    <property type="match status" value="1"/>
</dbReference>
<dbReference type="PROSITE" id="PS50054">
    <property type="entry name" value="TYR_PHOSPHATASE_DUAL"/>
    <property type="match status" value="1"/>
</dbReference>
<name>DUS21_MOUSE</name>
<organism>
    <name type="scientific">Mus musculus</name>
    <name type="common">Mouse</name>
    <dbReference type="NCBI Taxonomy" id="10090"/>
    <lineage>
        <taxon>Eukaryota</taxon>
        <taxon>Metazoa</taxon>
        <taxon>Chordata</taxon>
        <taxon>Craniata</taxon>
        <taxon>Vertebrata</taxon>
        <taxon>Euteleostomi</taxon>
        <taxon>Mammalia</taxon>
        <taxon>Eutheria</taxon>
        <taxon>Euarchontoglires</taxon>
        <taxon>Glires</taxon>
        <taxon>Rodentia</taxon>
        <taxon>Myomorpha</taxon>
        <taxon>Muroidea</taxon>
        <taxon>Muridae</taxon>
        <taxon>Murinae</taxon>
        <taxon>Mus</taxon>
        <taxon>Mus</taxon>
    </lineage>
</organism>
<evidence type="ECO:0000250" key="1">
    <source>
        <dbReference type="UniProtKB" id="Q9H596"/>
    </source>
</evidence>
<evidence type="ECO:0000255" key="2">
    <source>
        <dbReference type="PROSITE-ProRule" id="PRU00160"/>
    </source>
</evidence>
<evidence type="ECO:0000255" key="3">
    <source>
        <dbReference type="PROSITE-ProRule" id="PRU10044"/>
    </source>
</evidence>
<evidence type="ECO:0000269" key="4">
    <source>
    </source>
</evidence>
<evidence type="ECO:0000269" key="5">
    <source>
    </source>
</evidence>
<evidence type="ECO:0000269" key="6">
    <source>
    </source>
</evidence>
<evidence type="ECO:0000303" key="7">
    <source>
    </source>
</evidence>
<evidence type="ECO:0000305" key="8"/>
<evidence type="ECO:0000305" key="9">
    <source>
    </source>
</evidence>
<evidence type="ECO:0000312" key="10">
    <source>
        <dbReference type="MGI" id="MGI:1920797"/>
    </source>
</evidence>
<evidence type="ECO:0007744" key="11">
    <source>
        <dbReference type="PDB" id="8I7O"/>
    </source>
</evidence>
<evidence type="ECO:0007744" key="12">
    <source>
        <dbReference type="PDB" id="8I7R"/>
    </source>
</evidence>
<evidence type="ECO:0007744" key="13">
    <source>
        <dbReference type="PDB" id="8IYJ"/>
    </source>
</evidence>
<reference key="1">
    <citation type="journal article" date="2005" name="Science">
        <title>The transcriptional landscape of the mammalian genome.</title>
        <authorList>
            <person name="Carninci P."/>
            <person name="Kasukawa T."/>
            <person name="Katayama S."/>
            <person name="Gough J."/>
            <person name="Frith M.C."/>
            <person name="Maeda N."/>
            <person name="Oyama R."/>
            <person name="Ravasi T."/>
            <person name="Lenhard B."/>
            <person name="Wells C."/>
            <person name="Kodzius R."/>
            <person name="Shimokawa K."/>
            <person name="Bajic V.B."/>
            <person name="Brenner S.E."/>
            <person name="Batalov S."/>
            <person name="Forrest A.R."/>
            <person name="Zavolan M."/>
            <person name="Davis M.J."/>
            <person name="Wilming L.G."/>
            <person name="Aidinis V."/>
            <person name="Allen J.E."/>
            <person name="Ambesi-Impiombato A."/>
            <person name="Apweiler R."/>
            <person name="Aturaliya R.N."/>
            <person name="Bailey T.L."/>
            <person name="Bansal M."/>
            <person name="Baxter L."/>
            <person name="Beisel K.W."/>
            <person name="Bersano T."/>
            <person name="Bono H."/>
            <person name="Chalk A.M."/>
            <person name="Chiu K.P."/>
            <person name="Choudhary V."/>
            <person name="Christoffels A."/>
            <person name="Clutterbuck D.R."/>
            <person name="Crowe M.L."/>
            <person name="Dalla E."/>
            <person name="Dalrymple B.P."/>
            <person name="de Bono B."/>
            <person name="Della Gatta G."/>
            <person name="di Bernardo D."/>
            <person name="Down T."/>
            <person name="Engstrom P."/>
            <person name="Fagiolini M."/>
            <person name="Faulkner G."/>
            <person name="Fletcher C.F."/>
            <person name="Fukushima T."/>
            <person name="Furuno M."/>
            <person name="Futaki S."/>
            <person name="Gariboldi M."/>
            <person name="Georgii-Hemming P."/>
            <person name="Gingeras T.R."/>
            <person name="Gojobori T."/>
            <person name="Green R.E."/>
            <person name="Gustincich S."/>
            <person name="Harbers M."/>
            <person name="Hayashi Y."/>
            <person name="Hensch T.K."/>
            <person name="Hirokawa N."/>
            <person name="Hill D."/>
            <person name="Huminiecki L."/>
            <person name="Iacono M."/>
            <person name="Ikeo K."/>
            <person name="Iwama A."/>
            <person name="Ishikawa T."/>
            <person name="Jakt M."/>
            <person name="Kanapin A."/>
            <person name="Katoh M."/>
            <person name="Kawasawa Y."/>
            <person name="Kelso J."/>
            <person name="Kitamura H."/>
            <person name="Kitano H."/>
            <person name="Kollias G."/>
            <person name="Krishnan S.P."/>
            <person name="Kruger A."/>
            <person name="Kummerfeld S.K."/>
            <person name="Kurochkin I.V."/>
            <person name="Lareau L.F."/>
            <person name="Lazarevic D."/>
            <person name="Lipovich L."/>
            <person name="Liu J."/>
            <person name="Liuni S."/>
            <person name="McWilliam S."/>
            <person name="Madan Babu M."/>
            <person name="Madera M."/>
            <person name="Marchionni L."/>
            <person name="Matsuda H."/>
            <person name="Matsuzawa S."/>
            <person name="Miki H."/>
            <person name="Mignone F."/>
            <person name="Miyake S."/>
            <person name="Morris K."/>
            <person name="Mottagui-Tabar S."/>
            <person name="Mulder N."/>
            <person name="Nakano N."/>
            <person name="Nakauchi H."/>
            <person name="Ng P."/>
            <person name="Nilsson R."/>
            <person name="Nishiguchi S."/>
            <person name="Nishikawa S."/>
            <person name="Nori F."/>
            <person name="Ohara O."/>
            <person name="Okazaki Y."/>
            <person name="Orlando V."/>
            <person name="Pang K.C."/>
            <person name="Pavan W.J."/>
            <person name="Pavesi G."/>
            <person name="Pesole G."/>
            <person name="Petrovsky N."/>
            <person name="Piazza S."/>
            <person name="Reed J."/>
            <person name="Reid J.F."/>
            <person name="Ring B.Z."/>
            <person name="Ringwald M."/>
            <person name="Rost B."/>
            <person name="Ruan Y."/>
            <person name="Salzberg S.L."/>
            <person name="Sandelin A."/>
            <person name="Schneider C."/>
            <person name="Schoenbach C."/>
            <person name="Sekiguchi K."/>
            <person name="Semple C.A."/>
            <person name="Seno S."/>
            <person name="Sessa L."/>
            <person name="Sheng Y."/>
            <person name="Shibata Y."/>
            <person name="Shimada H."/>
            <person name="Shimada K."/>
            <person name="Silva D."/>
            <person name="Sinclair B."/>
            <person name="Sperling S."/>
            <person name="Stupka E."/>
            <person name="Sugiura K."/>
            <person name="Sultana R."/>
            <person name="Takenaka Y."/>
            <person name="Taki K."/>
            <person name="Tammoja K."/>
            <person name="Tan S.L."/>
            <person name="Tang S."/>
            <person name="Taylor M.S."/>
            <person name="Tegner J."/>
            <person name="Teichmann S.A."/>
            <person name="Ueda H.R."/>
            <person name="van Nimwegen E."/>
            <person name="Verardo R."/>
            <person name="Wei C.L."/>
            <person name="Yagi K."/>
            <person name="Yamanishi H."/>
            <person name="Zabarovsky E."/>
            <person name="Zhu S."/>
            <person name="Zimmer A."/>
            <person name="Hide W."/>
            <person name="Bult C."/>
            <person name="Grimmond S.M."/>
            <person name="Teasdale R.D."/>
            <person name="Liu E.T."/>
            <person name="Brusic V."/>
            <person name="Quackenbush J."/>
            <person name="Wahlestedt C."/>
            <person name="Mattick J.S."/>
            <person name="Hume D.A."/>
            <person name="Kai C."/>
            <person name="Sasaki D."/>
            <person name="Tomaru Y."/>
            <person name="Fukuda S."/>
            <person name="Kanamori-Katayama M."/>
            <person name="Suzuki M."/>
            <person name="Aoki J."/>
            <person name="Arakawa T."/>
            <person name="Iida J."/>
            <person name="Imamura K."/>
            <person name="Itoh M."/>
            <person name="Kato T."/>
            <person name="Kawaji H."/>
            <person name="Kawagashira N."/>
            <person name="Kawashima T."/>
            <person name="Kojima M."/>
            <person name="Kondo S."/>
            <person name="Konno H."/>
            <person name="Nakano K."/>
            <person name="Ninomiya N."/>
            <person name="Nishio T."/>
            <person name="Okada M."/>
            <person name="Plessy C."/>
            <person name="Shibata K."/>
            <person name="Shiraki T."/>
            <person name="Suzuki S."/>
            <person name="Tagami M."/>
            <person name="Waki K."/>
            <person name="Watahiki A."/>
            <person name="Okamura-Oho Y."/>
            <person name="Suzuki H."/>
            <person name="Kawai J."/>
            <person name="Hayashizaki Y."/>
        </authorList>
    </citation>
    <scope>NUCLEOTIDE SEQUENCE [LARGE SCALE MRNA]</scope>
    <source>
        <strain>C57BL/6J</strain>
        <tissue>Testis</tissue>
    </source>
</reference>
<reference key="2">
    <citation type="journal article" date="2009" name="PLoS Biol.">
        <title>Lineage-specific biology revealed by a finished genome assembly of the mouse.</title>
        <authorList>
            <person name="Church D.M."/>
            <person name="Goodstadt L."/>
            <person name="Hillier L.W."/>
            <person name="Zody M.C."/>
            <person name="Goldstein S."/>
            <person name="She X."/>
            <person name="Bult C.J."/>
            <person name="Agarwala R."/>
            <person name="Cherry J.L."/>
            <person name="DiCuccio M."/>
            <person name="Hlavina W."/>
            <person name="Kapustin Y."/>
            <person name="Meric P."/>
            <person name="Maglott D."/>
            <person name="Birtle Z."/>
            <person name="Marques A.C."/>
            <person name="Graves T."/>
            <person name="Zhou S."/>
            <person name="Teague B."/>
            <person name="Potamousis K."/>
            <person name="Churas C."/>
            <person name="Place M."/>
            <person name="Herschleb J."/>
            <person name="Runnheim R."/>
            <person name="Forrest D."/>
            <person name="Amos-Landgraf J."/>
            <person name="Schwartz D.C."/>
            <person name="Cheng Z."/>
            <person name="Lindblad-Toh K."/>
            <person name="Eichler E.E."/>
            <person name="Ponting C.P."/>
        </authorList>
    </citation>
    <scope>NUCLEOTIDE SEQUENCE [LARGE SCALE GENOMIC DNA]</scope>
    <source>
        <strain>C57BL/6J</strain>
    </source>
</reference>
<reference key="3">
    <citation type="submission" date="2005-07" db="EMBL/GenBank/DDBJ databases">
        <authorList>
            <person name="Mural R.J."/>
            <person name="Adams M.D."/>
            <person name="Myers E.W."/>
            <person name="Smith H.O."/>
            <person name="Venter J.C."/>
        </authorList>
    </citation>
    <scope>NUCLEOTIDE SEQUENCE [LARGE SCALE GENOMIC DNA]</scope>
</reference>
<reference key="4">
    <citation type="journal article" date="2004" name="Genome Res.">
        <title>The status, quality, and expansion of the NIH full-length cDNA project: the Mammalian Gene Collection (MGC).</title>
        <authorList>
            <consortium name="The MGC Project Team"/>
        </authorList>
    </citation>
    <scope>NUCLEOTIDE SEQUENCE [LARGE SCALE MRNA]</scope>
    <source>
        <tissue>Testis</tissue>
    </source>
</reference>
<reference key="5">
    <citation type="journal article" date="2008" name="J. Biol. Chem.">
        <title>Dual specificity phosphatases 18 and 21 target to opposing sides of the mitochondrial inner membrane.</title>
        <authorList>
            <person name="Rardin M.J."/>
            <person name="Wiley S.E."/>
            <person name="Murphy A.N."/>
            <person name="Pagliarini D.J."/>
            <person name="Dixon J.E."/>
        </authorList>
    </citation>
    <scope>CATALYTIC ACTIVITY</scope>
    <scope>SUBCELLULAR LOCATION</scope>
    <scope>TISSUE SPECIFICITY</scope>
</reference>
<reference key="6">
    <citation type="journal article" date="2010" name="Cell">
        <title>A tissue-specific atlas of mouse protein phosphorylation and expression.</title>
        <authorList>
            <person name="Huttlin E.L."/>
            <person name="Jedrychowski M.P."/>
            <person name="Elias J.E."/>
            <person name="Goswami T."/>
            <person name="Rad R."/>
            <person name="Beausoleil S.A."/>
            <person name="Villen J."/>
            <person name="Haas W."/>
            <person name="Sowa M.E."/>
            <person name="Gygi S.P."/>
        </authorList>
    </citation>
    <scope>IDENTIFICATION BY MASS SPECTROMETRY [LARGE SCALE ANALYSIS]</scope>
    <source>
        <tissue>Testis</tissue>
    </source>
</reference>
<reference evidence="13" key="7">
    <citation type="journal article" date="2023" name="Cell">
        <title>Structures of sperm flagellar doublet microtubules expand the genetic spectrum of male infertility.</title>
        <authorList>
            <person name="Zhou L."/>
            <person name="Liu H."/>
            <person name="Liu S."/>
            <person name="Yang X."/>
            <person name="Dong Y."/>
            <person name="Pan Y."/>
            <person name="Xiao Z."/>
            <person name="Zheng B."/>
            <person name="Sun Y."/>
            <person name="Huang P."/>
            <person name="Zhang X."/>
            <person name="Hu J."/>
            <person name="Sun R."/>
            <person name="Feng S."/>
            <person name="Zhu Y."/>
            <person name="Liu M."/>
            <person name="Gui M."/>
            <person name="Wu J."/>
        </authorList>
    </citation>
    <scope>STRUCTURE BY ELECTRON MICROSCOPY (3.50 ANGSTROMS) OF SPERM FLAGELLAR DOUBLET MICROTUBULES</scope>
    <scope>FUNCTION</scope>
    <scope>BIOPHYSICOCHEMICAL PROPERTIES</scope>
    <scope>SUBCELLULAR LOCATION</scope>
    <scope>SUBUNIT</scope>
    <scope>MUTAGENESIS OF CYS-105</scope>
</reference>
<reference evidence="11 12" key="8">
    <citation type="journal article" date="2023" name="Cell Discov.">
        <title>In-cell structural insight into the stability of sperm microtubule doublet.</title>
        <authorList>
            <person name="Tai L."/>
            <person name="Yin G."/>
            <person name="Huang X."/>
            <person name="Sun F."/>
            <person name="Zhu Y."/>
        </authorList>
    </citation>
    <scope>STRUCTURE BY ELECTRON MICROSCOPY (4.50 ANGSTROMS)</scope>
    <scope>FUNCTION</scope>
    <scope>SUBUNIT</scope>
    <scope>SUBCELLULAR LOCATION</scope>
</reference>
<gene>
    <name evidence="7 10" type="primary">Dusp21</name>
</gene>
<feature type="chain" id="PRO_0000411986" description="Dual specificity phosphatase 21">
    <location>
        <begin position="1"/>
        <end position="189"/>
    </location>
</feature>
<feature type="domain" description="Tyrosine-protein phosphatase" evidence="2">
    <location>
        <begin position="20"/>
        <end position="161"/>
    </location>
</feature>
<feature type="region of interest" description="Sufficient for mitochondrial localization">
    <location>
        <begin position="43"/>
        <end position="128"/>
    </location>
</feature>
<feature type="active site" description="Phosphocysteine intermediate" evidence="2 9">
    <location>
        <position position="105"/>
    </location>
</feature>
<feature type="mutagenesis site" description="Abolished protein phosphatase activity." evidence="5">
    <original>C</original>
    <variation>A</variation>
    <location>
        <position position="105"/>
    </location>
</feature>